<keyword id="KW-0030">Aminoacyl-tRNA synthetase</keyword>
<keyword id="KW-0067">ATP-binding</keyword>
<keyword id="KW-0963">Cytoplasm</keyword>
<keyword id="KW-0436">Ligase</keyword>
<keyword id="KW-0547">Nucleotide-binding</keyword>
<keyword id="KW-0648">Protein biosynthesis</keyword>
<keyword id="KW-1185">Reference proteome</keyword>
<reference key="1">
    <citation type="journal article" date="2005" name="J. Bacteriol.">
        <title>Insights on evolution of virulence and resistance from the complete genome analysis of an early methicillin-resistant Staphylococcus aureus strain and a biofilm-producing methicillin-resistant Staphylococcus epidermidis strain.</title>
        <authorList>
            <person name="Gill S.R."/>
            <person name="Fouts D.E."/>
            <person name="Archer G.L."/>
            <person name="Mongodin E.F."/>
            <person name="DeBoy R.T."/>
            <person name="Ravel J."/>
            <person name="Paulsen I.T."/>
            <person name="Kolonay J.F."/>
            <person name="Brinkac L.M."/>
            <person name="Beanan M.J."/>
            <person name="Dodson R.J."/>
            <person name="Daugherty S.C."/>
            <person name="Madupu R."/>
            <person name="Angiuoli S.V."/>
            <person name="Durkin A.S."/>
            <person name="Haft D.H."/>
            <person name="Vamathevan J.J."/>
            <person name="Khouri H."/>
            <person name="Utterback T.R."/>
            <person name="Lee C."/>
            <person name="Dimitrov G."/>
            <person name="Jiang L."/>
            <person name="Qin H."/>
            <person name="Weidman J."/>
            <person name="Tran K."/>
            <person name="Kang K.H."/>
            <person name="Hance I.R."/>
            <person name="Nelson K.E."/>
            <person name="Fraser C.M."/>
        </authorList>
    </citation>
    <scope>NUCLEOTIDE SEQUENCE [LARGE SCALE GENOMIC DNA]</scope>
    <source>
        <strain>ATCC 35984 / DSM 28319 / BCRC 17069 / CCUG 31568 / BM 3577 / RP62A</strain>
    </source>
</reference>
<dbReference type="EC" id="6.1.1.19" evidence="1"/>
<dbReference type="EMBL" id="CP000029">
    <property type="protein sequence ID" value="AAW53688.1"/>
    <property type="molecule type" value="Genomic_DNA"/>
</dbReference>
<dbReference type="RefSeq" id="WP_002456919.1">
    <property type="nucleotide sequence ID" value="NC_002976.3"/>
</dbReference>
<dbReference type="SMR" id="Q5HRD1"/>
<dbReference type="STRING" id="176279.SERP0262"/>
<dbReference type="KEGG" id="ser:SERP0262"/>
<dbReference type="eggNOG" id="COG0018">
    <property type="taxonomic scope" value="Bacteria"/>
</dbReference>
<dbReference type="HOGENOM" id="CLU_006406_0_1_9"/>
<dbReference type="Proteomes" id="UP000000531">
    <property type="component" value="Chromosome"/>
</dbReference>
<dbReference type="GO" id="GO:0005737">
    <property type="term" value="C:cytoplasm"/>
    <property type="evidence" value="ECO:0007669"/>
    <property type="project" value="UniProtKB-SubCell"/>
</dbReference>
<dbReference type="GO" id="GO:0004814">
    <property type="term" value="F:arginine-tRNA ligase activity"/>
    <property type="evidence" value="ECO:0007669"/>
    <property type="project" value="UniProtKB-UniRule"/>
</dbReference>
<dbReference type="GO" id="GO:0005524">
    <property type="term" value="F:ATP binding"/>
    <property type="evidence" value="ECO:0007669"/>
    <property type="project" value="UniProtKB-UniRule"/>
</dbReference>
<dbReference type="GO" id="GO:0006420">
    <property type="term" value="P:arginyl-tRNA aminoacylation"/>
    <property type="evidence" value="ECO:0007669"/>
    <property type="project" value="UniProtKB-UniRule"/>
</dbReference>
<dbReference type="CDD" id="cd07956">
    <property type="entry name" value="Anticodon_Ia_Arg"/>
    <property type="match status" value="1"/>
</dbReference>
<dbReference type="CDD" id="cd00671">
    <property type="entry name" value="ArgRS_core"/>
    <property type="match status" value="1"/>
</dbReference>
<dbReference type="FunFam" id="1.10.730.10:FF:000008">
    <property type="entry name" value="Arginine--tRNA ligase"/>
    <property type="match status" value="1"/>
</dbReference>
<dbReference type="FunFam" id="3.30.1360.70:FF:000003">
    <property type="entry name" value="Arginine--tRNA ligase"/>
    <property type="match status" value="1"/>
</dbReference>
<dbReference type="FunFam" id="3.40.50.620:FF:000062">
    <property type="entry name" value="Arginine--tRNA ligase"/>
    <property type="match status" value="1"/>
</dbReference>
<dbReference type="Gene3D" id="3.30.1360.70">
    <property type="entry name" value="Arginyl tRNA synthetase N-terminal domain"/>
    <property type="match status" value="1"/>
</dbReference>
<dbReference type="Gene3D" id="3.40.50.620">
    <property type="entry name" value="HUPs"/>
    <property type="match status" value="1"/>
</dbReference>
<dbReference type="Gene3D" id="1.10.730.10">
    <property type="entry name" value="Isoleucyl-tRNA Synthetase, Domain 1"/>
    <property type="match status" value="1"/>
</dbReference>
<dbReference type="HAMAP" id="MF_00123">
    <property type="entry name" value="Arg_tRNA_synth"/>
    <property type="match status" value="1"/>
</dbReference>
<dbReference type="InterPro" id="IPR001412">
    <property type="entry name" value="aa-tRNA-synth_I_CS"/>
</dbReference>
<dbReference type="InterPro" id="IPR001278">
    <property type="entry name" value="Arg-tRNA-ligase"/>
</dbReference>
<dbReference type="InterPro" id="IPR005148">
    <property type="entry name" value="Arg-tRNA-synth_N"/>
</dbReference>
<dbReference type="InterPro" id="IPR036695">
    <property type="entry name" value="Arg-tRNA-synth_N_sf"/>
</dbReference>
<dbReference type="InterPro" id="IPR035684">
    <property type="entry name" value="ArgRS_core"/>
</dbReference>
<dbReference type="InterPro" id="IPR008909">
    <property type="entry name" value="DALR_anticod-bd"/>
</dbReference>
<dbReference type="InterPro" id="IPR014729">
    <property type="entry name" value="Rossmann-like_a/b/a_fold"/>
</dbReference>
<dbReference type="InterPro" id="IPR009080">
    <property type="entry name" value="tRNAsynth_Ia_anticodon-bd"/>
</dbReference>
<dbReference type="NCBIfam" id="TIGR00456">
    <property type="entry name" value="argS"/>
    <property type="match status" value="1"/>
</dbReference>
<dbReference type="PANTHER" id="PTHR11956:SF5">
    <property type="entry name" value="ARGININE--TRNA LIGASE, CYTOPLASMIC"/>
    <property type="match status" value="1"/>
</dbReference>
<dbReference type="PANTHER" id="PTHR11956">
    <property type="entry name" value="ARGINYL-TRNA SYNTHETASE"/>
    <property type="match status" value="1"/>
</dbReference>
<dbReference type="Pfam" id="PF03485">
    <property type="entry name" value="Arg_tRNA_synt_N"/>
    <property type="match status" value="1"/>
</dbReference>
<dbReference type="Pfam" id="PF05746">
    <property type="entry name" value="DALR_1"/>
    <property type="match status" value="1"/>
</dbReference>
<dbReference type="Pfam" id="PF00750">
    <property type="entry name" value="tRNA-synt_1d"/>
    <property type="match status" value="1"/>
</dbReference>
<dbReference type="PRINTS" id="PR01038">
    <property type="entry name" value="TRNASYNTHARG"/>
</dbReference>
<dbReference type="SMART" id="SM01016">
    <property type="entry name" value="Arg_tRNA_synt_N"/>
    <property type="match status" value="1"/>
</dbReference>
<dbReference type="SMART" id="SM00836">
    <property type="entry name" value="DALR_1"/>
    <property type="match status" value="1"/>
</dbReference>
<dbReference type="SUPFAM" id="SSF47323">
    <property type="entry name" value="Anticodon-binding domain of a subclass of class I aminoacyl-tRNA synthetases"/>
    <property type="match status" value="1"/>
</dbReference>
<dbReference type="SUPFAM" id="SSF55190">
    <property type="entry name" value="Arginyl-tRNA synthetase (ArgRS), N-terminal 'additional' domain"/>
    <property type="match status" value="1"/>
</dbReference>
<dbReference type="SUPFAM" id="SSF52374">
    <property type="entry name" value="Nucleotidylyl transferase"/>
    <property type="match status" value="1"/>
</dbReference>
<dbReference type="PROSITE" id="PS00178">
    <property type="entry name" value="AA_TRNA_LIGASE_I"/>
    <property type="match status" value="1"/>
</dbReference>
<feature type="chain" id="PRO_0000151612" description="Arginine--tRNA ligase">
    <location>
        <begin position="1"/>
        <end position="553"/>
    </location>
</feature>
<feature type="short sequence motif" description="'HIGH' region">
    <location>
        <begin position="130"/>
        <end position="140"/>
    </location>
</feature>
<proteinExistence type="inferred from homology"/>
<name>SYR_STAEQ</name>
<evidence type="ECO:0000255" key="1">
    <source>
        <dbReference type="HAMAP-Rule" id="MF_00123"/>
    </source>
</evidence>
<comment type="catalytic activity">
    <reaction evidence="1">
        <text>tRNA(Arg) + L-arginine + ATP = L-arginyl-tRNA(Arg) + AMP + diphosphate</text>
        <dbReference type="Rhea" id="RHEA:20301"/>
        <dbReference type="Rhea" id="RHEA-COMP:9658"/>
        <dbReference type="Rhea" id="RHEA-COMP:9673"/>
        <dbReference type="ChEBI" id="CHEBI:30616"/>
        <dbReference type="ChEBI" id="CHEBI:32682"/>
        <dbReference type="ChEBI" id="CHEBI:33019"/>
        <dbReference type="ChEBI" id="CHEBI:78442"/>
        <dbReference type="ChEBI" id="CHEBI:78513"/>
        <dbReference type="ChEBI" id="CHEBI:456215"/>
        <dbReference type="EC" id="6.1.1.19"/>
    </reaction>
</comment>
<comment type="subunit">
    <text evidence="1">Monomer.</text>
</comment>
<comment type="subcellular location">
    <subcellularLocation>
        <location evidence="1">Cytoplasm</location>
    </subcellularLocation>
</comment>
<comment type="similarity">
    <text evidence="1">Belongs to the class-I aminoacyl-tRNA synthetase family.</text>
</comment>
<gene>
    <name evidence="1" type="primary">argS</name>
    <name type="ordered locus">SERP0262</name>
</gene>
<organism>
    <name type="scientific">Staphylococcus epidermidis (strain ATCC 35984 / DSM 28319 / BCRC 17069 / CCUG 31568 / BM 3577 / RP62A)</name>
    <dbReference type="NCBI Taxonomy" id="176279"/>
    <lineage>
        <taxon>Bacteria</taxon>
        <taxon>Bacillati</taxon>
        <taxon>Bacillota</taxon>
        <taxon>Bacilli</taxon>
        <taxon>Bacillales</taxon>
        <taxon>Staphylococcaceae</taxon>
        <taxon>Staphylococcus</taxon>
    </lineage>
</organism>
<accession>Q5HRD1</accession>
<protein>
    <recommendedName>
        <fullName evidence="1">Arginine--tRNA ligase</fullName>
        <ecNumber evidence="1">6.1.1.19</ecNumber>
    </recommendedName>
    <alternativeName>
        <fullName evidence="1">Arginyl-tRNA synthetase</fullName>
        <shortName evidence="1">ArgRS</shortName>
    </alternativeName>
</protein>
<sequence>MSIIDQVKQTLIEEIEVSIRKANLAEDIPEIKIEIPKDPKNGDYSSNIAMVLTKIAKRNPREIAQAIVDHLDTSKAHVKQVDIAGPGFINFYLDNQYLTAIIPEAITKGDRFGYATQSKNTNILLEYVSANPTGDLHIGHARNASVGDSLANILIAAGYNVTREYYINDAGNQITNLARSIEARYFEALGDTSYEMPADGYNGKDIIEIGKDLAVKHPEIKDYTDEERLKTFRQLGVDYEMEKLKKDLSDFNVHFDNWFSETSLYENGAIENTLSKMKELGYTYEADGATWLRTSDFKDDKDRVLIKKDGNYTYFTPDTAYHYNKINRGNDILIDLMGADHHGYINRLKASLETFGVDSDRLEIQIMQMVRLMQNGEEVKMSKRTGNAITLREIMDEVGIDAARYFLTMRSPDSHFDFDLELAKEQSQDNPIYYAQYAHARICSILKQAKEQGIEVSTDADFSKINNDKAIDLLKKVAEFESTIESAAEHRAPHRLTNYIQDLAAAFHKFYNAEKVLTDDTEKTKAYVAMIEAVRITLHNALALVGVTAPESM</sequence>